<name>RPOA_BACAN</name>
<accession>Q81VQ4</accession>
<accession>Q6I4Q7</accession>
<accession>Q6KYF3</accession>
<comment type="function">
    <text evidence="1">DNA-dependent RNA polymerase catalyzes the transcription of DNA into RNA using the four ribonucleoside triphosphates as substrates.</text>
</comment>
<comment type="catalytic activity">
    <reaction evidence="1">
        <text>RNA(n) + a ribonucleoside 5'-triphosphate = RNA(n+1) + diphosphate</text>
        <dbReference type="Rhea" id="RHEA:21248"/>
        <dbReference type="Rhea" id="RHEA-COMP:14527"/>
        <dbReference type="Rhea" id="RHEA-COMP:17342"/>
        <dbReference type="ChEBI" id="CHEBI:33019"/>
        <dbReference type="ChEBI" id="CHEBI:61557"/>
        <dbReference type="ChEBI" id="CHEBI:140395"/>
        <dbReference type="EC" id="2.7.7.6"/>
    </reaction>
</comment>
<comment type="subunit">
    <text evidence="1">Homodimer. The RNAP catalytic core consists of 2 alpha, 1 beta, 1 beta' and 1 omega subunit. When a sigma factor is associated with the core the holoenzyme is formed, which can initiate transcription.</text>
</comment>
<comment type="domain">
    <text evidence="1">The N-terminal domain is essential for RNAP assembly and basal transcription, whereas the C-terminal domain is involved in interaction with transcriptional regulators and with upstream promoter elements.</text>
</comment>
<comment type="similarity">
    <text evidence="1">Belongs to the RNA polymerase alpha chain family.</text>
</comment>
<proteinExistence type="inferred from homology"/>
<gene>
    <name evidence="1" type="primary">rpoA</name>
    <name type="ordered locus">BA_0137</name>
    <name type="ordered locus">GBAA_0137</name>
    <name type="ordered locus">BAS0137</name>
</gene>
<keyword id="KW-0240">DNA-directed RNA polymerase</keyword>
<keyword id="KW-0548">Nucleotidyltransferase</keyword>
<keyword id="KW-1185">Reference proteome</keyword>
<keyword id="KW-0804">Transcription</keyword>
<keyword id="KW-0808">Transferase</keyword>
<sequence>MIEIEKPKIETVELNEDAKYGKFVIEPLERGYGTTLGNSLRRILLSSLPGAAVTAIQIDGVLHEFSTVEGVVEDVTTIILNLKKLALKIYSEEEKTLEIDVQGEGIVTAADITHDSDVEILNPDLHIATLAKDAHFRVRLTAKRGRGYTPADANKSEDQPIGVIPIDSIYTPVSRVTYQVEKTRVGQVANYDKLTLDVWTDGSIGPKEAISLGAKILTEHLNIFVGLTDEAQNAEIMVEKEEDQKEKVLEMTIEELDLSVRSYNCLKRAGINTVQELANKTEEDMMKVRNLGRKSLEEVKHKLEELGLGLRKDD</sequence>
<dbReference type="EC" id="2.7.7.6" evidence="1"/>
<dbReference type="EMBL" id="AE016879">
    <property type="protein sequence ID" value="AAP24191.1"/>
    <property type="molecule type" value="Genomic_DNA"/>
</dbReference>
<dbReference type="EMBL" id="AE017334">
    <property type="protein sequence ID" value="AAT29217.1"/>
    <property type="molecule type" value="Genomic_DNA"/>
</dbReference>
<dbReference type="EMBL" id="AE017225">
    <property type="protein sequence ID" value="AAT52474.1"/>
    <property type="molecule type" value="Genomic_DNA"/>
</dbReference>
<dbReference type="RefSeq" id="NP_842705.1">
    <property type="nucleotide sequence ID" value="NC_003997.3"/>
</dbReference>
<dbReference type="RefSeq" id="WP_000569643.1">
    <property type="nucleotide sequence ID" value="NZ_WXXJ01000051.1"/>
</dbReference>
<dbReference type="RefSeq" id="YP_026423.1">
    <property type="nucleotide sequence ID" value="NC_005945.1"/>
</dbReference>
<dbReference type="SMR" id="Q81VQ4"/>
<dbReference type="STRING" id="261594.GBAA_0137"/>
<dbReference type="DNASU" id="1086425"/>
<dbReference type="KEGG" id="ban:BA_0137"/>
<dbReference type="KEGG" id="bar:GBAA_0137"/>
<dbReference type="KEGG" id="bat:BAS0137"/>
<dbReference type="PATRIC" id="fig|198094.11.peg.134"/>
<dbReference type="eggNOG" id="COG0202">
    <property type="taxonomic scope" value="Bacteria"/>
</dbReference>
<dbReference type="HOGENOM" id="CLU_053084_0_1_9"/>
<dbReference type="OMA" id="PIKNVKY"/>
<dbReference type="OrthoDB" id="9805706at2"/>
<dbReference type="Proteomes" id="UP000000427">
    <property type="component" value="Chromosome"/>
</dbReference>
<dbReference type="Proteomes" id="UP000000594">
    <property type="component" value="Chromosome"/>
</dbReference>
<dbReference type="GO" id="GO:0005737">
    <property type="term" value="C:cytoplasm"/>
    <property type="evidence" value="ECO:0007669"/>
    <property type="project" value="UniProtKB-ARBA"/>
</dbReference>
<dbReference type="GO" id="GO:0000428">
    <property type="term" value="C:DNA-directed RNA polymerase complex"/>
    <property type="evidence" value="ECO:0007669"/>
    <property type="project" value="UniProtKB-KW"/>
</dbReference>
<dbReference type="GO" id="GO:0003677">
    <property type="term" value="F:DNA binding"/>
    <property type="evidence" value="ECO:0007669"/>
    <property type="project" value="UniProtKB-UniRule"/>
</dbReference>
<dbReference type="GO" id="GO:0003899">
    <property type="term" value="F:DNA-directed RNA polymerase activity"/>
    <property type="evidence" value="ECO:0007669"/>
    <property type="project" value="UniProtKB-UniRule"/>
</dbReference>
<dbReference type="GO" id="GO:0046983">
    <property type="term" value="F:protein dimerization activity"/>
    <property type="evidence" value="ECO:0007669"/>
    <property type="project" value="InterPro"/>
</dbReference>
<dbReference type="GO" id="GO:0006351">
    <property type="term" value="P:DNA-templated transcription"/>
    <property type="evidence" value="ECO:0007669"/>
    <property type="project" value="UniProtKB-UniRule"/>
</dbReference>
<dbReference type="CDD" id="cd06928">
    <property type="entry name" value="RNAP_alpha_NTD"/>
    <property type="match status" value="1"/>
</dbReference>
<dbReference type="FunFam" id="1.10.150.20:FF:000001">
    <property type="entry name" value="DNA-directed RNA polymerase subunit alpha"/>
    <property type="match status" value="1"/>
</dbReference>
<dbReference type="FunFam" id="2.170.120.12:FF:000001">
    <property type="entry name" value="DNA-directed RNA polymerase subunit alpha"/>
    <property type="match status" value="1"/>
</dbReference>
<dbReference type="Gene3D" id="1.10.150.20">
    <property type="entry name" value="5' to 3' exonuclease, C-terminal subdomain"/>
    <property type="match status" value="1"/>
</dbReference>
<dbReference type="Gene3D" id="2.170.120.12">
    <property type="entry name" value="DNA-directed RNA polymerase, insert domain"/>
    <property type="match status" value="1"/>
</dbReference>
<dbReference type="Gene3D" id="3.30.1360.10">
    <property type="entry name" value="RNA polymerase, RBP11-like subunit"/>
    <property type="match status" value="1"/>
</dbReference>
<dbReference type="HAMAP" id="MF_00059">
    <property type="entry name" value="RNApol_bact_RpoA"/>
    <property type="match status" value="1"/>
</dbReference>
<dbReference type="InterPro" id="IPR011262">
    <property type="entry name" value="DNA-dir_RNA_pol_insert"/>
</dbReference>
<dbReference type="InterPro" id="IPR011263">
    <property type="entry name" value="DNA-dir_RNA_pol_RpoA/D/Rpb3"/>
</dbReference>
<dbReference type="InterPro" id="IPR011773">
    <property type="entry name" value="DNA-dir_RpoA"/>
</dbReference>
<dbReference type="InterPro" id="IPR036603">
    <property type="entry name" value="RBP11-like"/>
</dbReference>
<dbReference type="InterPro" id="IPR011260">
    <property type="entry name" value="RNAP_asu_C"/>
</dbReference>
<dbReference type="InterPro" id="IPR036643">
    <property type="entry name" value="RNApol_insert_sf"/>
</dbReference>
<dbReference type="NCBIfam" id="NF003513">
    <property type="entry name" value="PRK05182.1-2"/>
    <property type="match status" value="1"/>
</dbReference>
<dbReference type="NCBIfam" id="NF003515">
    <property type="entry name" value="PRK05182.2-1"/>
    <property type="match status" value="1"/>
</dbReference>
<dbReference type="NCBIfam" id="NF003516">
    <property type="entry name" value="PRK05182.2-2"/>
    <property type="match status" value="1"/>
</dbReference>
<dbReference type="NCBIfam" id="NF003519">
    <property type="entry name" value="PRK05182.2-5"/>
    <property type="match status" value="1"/>
</dbReference>
<dbReference type="NCBIfam" id="TIGR02027">
    <property type="entry name" value="rpoA"/>
    <property type="match status" value="1"/>
</dbReference>
<dbReference type="Pfam" id="PF01000">
    <property type="entry name" value="RNA_pol_A_bac"/>
    <property type="match status" value="1"/>
</dbReference>
<dbReference type="Pfam" id="PF03118">
    <property type="entry name" value="RNA_pol_A_CTD"/>
    <property type="match status" value="1"/>
</dbReference>
<dbReference type="Pfam" id="PF01193">
    <property type="entry name" value="RNA_pol_L"/>
    <property type="match status" value="1"/>
</dbReference>
<dbReference type="SMART" id="SM00662">
    <property type="entry name" value="RPOLD"/>
    <property type="match status" value="1"/>
</dbReference>
<dbReference type="SUPFAM" id="SSF47789">
    <property type="entry name" value="C-terminal domain of RNA polymerase alpha subunit"/>
    <property type="match status" value="1"/>
</dbReference>
<dbReference type="SUPFAM" id="SSF56553">
    <property type="entry name" value="Insert subdomain of RNA polymerase alpha subunit"/>
    <property type="match status" value="1"/>
</dbReference>
<dbReference type="SUPFAM" id="SSF55257">
    <property type="entry name" value="RBP11-like subunits of RNA polymerase"/>
    <property type="match status" value="1"/>
</dbReference>
<organism>
    <name type="scientific">Bacillus anthracis</name>
    <dbReference type="NCBI Taxonomy" id="1392"/>
    <lineage>
        <taxon>Bacteria</taxon>
        <taxon>Bacillati</taxon>
        <taxon>Bacillota</taxon>
        <taxon>Bacilli</taxon>
        <taxon>Bacillales</taxon>
        <taxon>Bacillaceae</taxon>
        <taxon>Bacillus</taxon>
        <taxon>Bacillus cereus group</taxon>
    </lineage>
</organism>
<reference key="1">
    <citation type="journal article" date="2003" name="Nature">
        <title>The genome sequence of Bacillus anthracis Ames and comparison to closely related bacteria.</title>
        <authorList>
            <person name="Read T.D."/>
            <person name="Peterson S.N."/>
            <person name="Tourasse N.J."/>
            <person name="Baillie L.W."/>
            <person name="Paulsen I.T."/>
            <person name="Nelson K.E."/>
            <person name="Tettelin H."/>
            <person name="Fouts D.E."/>
            <person name="Eisen J.A."/>
            <person name="Gill S.R."/>
            <person name="Holtzapple E.K."/>
            <person name="Okstad O.A."/>
            <person name="Helgason E."/>
            <person name="Rilstone J."/>
            <person name="Wu M."/>
            <person name="Kolonay J.F."/>
            <person name="Beanan M.J."/>
            <person name="Dodson R.J."/>
            <person name="Brinkac L.M."/>
            <person name="Gwinn M.L."/>
            <person name="DeBoy R.T."/>
            <person name="Madpu R."/>
            <person name="Daugherty S.C."/>
            <person name="Durkin A.S."/>
            <person name="Haft D.H."/>
            <person name="Nelson W.C."/>
            <person name="Peterson J.D."/>
            <person name="Pop M."/>
            <person name="Khouri H.M."/>
            <person name="Radune D."/>
            <person name="Benton J.L."/>
            <person name="Mahamoud Y."/>
            <person name="Jiang L."/>
            <person name="Hance I.R."/>
            <person name="Weidman J.F."/>
            <person name="Berry K.J."/>
            <person name="Plaut R.D."/>
            <person name="Wolf A.M."/>
            <person name="Watkins K.L."/>
            <person name="Nierman W.C."/>
            <person name="Hazen A."/>
            <person name="Cline R.T."/>
            <person name="Redmond C."/>
            <person name="Thwaite J.E."/>
            <person name="White O."/>
            <person name="Salzberg S.L."/>
            <person name="Thomason B."/>
            <person name="Friedlander A.M."/>
            <person name="Koehler T.M."/>
            <person name="Hanna P.C."/>
            <person name="Kolstoe A.-B."/>
            <person name="Fraser C.M."/>
        </authorList>
    </citation>
    <scope>NUCLEOTIDE SEQUENCE [LARGE SCALE GENOMIC DNA]</scope>
    <source>
        <strain>Ames / isolate Porton</strain>
    </source>
</reference>
<reference key="2">
    <citation type="journal article" date="2009" name="J. Bacteriol.">
        <title>The complete genome sequence of Bacillus anthracis Ames 'Ancestor'.</title>
        <authorList>
            <person name="Ravel J."/>
            <person name="Jiang L."/>
            <person name="Stanley S.T."/>
            <person name="Wilson M.R."/>
            <person name="Decker R.S."/>
            <person name="Read T.D."/>
            <person name="Worsham P."/>
            <person name="Keim P.S."/>
            <person name="Salzberg S.L."/>
            <person name="Fraser-Liggett C.M."/>
            <person name="Rasko D.A."/>
        </authorList>
    </citation>
    <scope>NUCLEOTIDE SEQUENCE [LARGE SCALE GENOMIC DNA]</scope>
    <source>
        <strain>Ames ancestor</strain>
    </source>
</reference>
<reference key="3">
    <citation type="submission" date="2004-01" db="EMBL/GenBank/DDBJ databases">
        <title>Complete genome sequence of Bacillus anthracis Sterne.</title>
        <authorList>
            <person name="Brettin T.S."/>
            <person name="Bruce D."/>
            <person name="Challacombe J.F."/>
            <person name="Gilna P."/>
            <person name="Han C."/>
            <person name="Hill K."/>
            <person name="Hitchcock P."/>
            <person name="Jackson P."/>
            <person name="Keim P."/>
            <person name="Longmire J."/>
            <person name="Lucas S."/>
            <person name="Okinaka R."/>
            <person name="Richardson P."/>
            <person name="Rubin E."/>
            <person name="Tice H."/>
        </authorList>
    </citation>
    <scope>NUCLEOTIDE SEQUENCE [LARGE SCALE GENOMIC DNA]</scope>
    <source>
        <strain>Sterne</strain>
    </source>
</reference>
<feature type="chain" id="PRO_0000175257" description="DNA-directed RNA polymerase subunit alpha">
    <location>
        <begin position="1"/>
        <end position="314"/>
    </location>
</feature>
<feature type="region of interest" description="Alpha N-terminal domain (alpha-NTD)" evidence="1">
    <location>
        <begin position="1"/>
        <end position="228"/>
    </location>
</feature>
<feature type="region of interest" description="Alpha C-terminal domain (alpha-CTD)" evidence="1">
    <location>
        <begin position="245"/>
        <end position="314"/>
    </location>
</feature>
<protein>
    <recommendedName>
        <fullName evidence="1">DNA-directed RNA polymerase subunit alpha</fullName>
        <shortName evidence="1">RNAP subunit alpha</shortName>
        <ecNumber evidence="1">2.7.7.6</ecNumber>
    </recommendedName>
    <alternativeName>
        <fullName evidence="1">RNA polymerase subunit alpha</fullName>
    </alternativeName>
    <alternativeName>
        <fullName evidence="1">Transcriptase subunit alpha</fullName>
    </alternativeName>
</protein>
<evidence type="ECO:0000255" key="1">
    <source>
        <dbReference type="HAMAP-Rule" id="MF_00059"/>
    </source>
</evidence>